<evidence type="ECO:0000255" key="1">
    <source>
        <dbReference type="HAMAP-Rule" id="MF_00159"/>
    </source>
</evidence>
<organism>
    <name type="scientific">Escherichia coli (strain UTI89 / UPEC)</name>
    <dbReference type="NCBI Taxonomy" id="364106"/>
    <lineage>
        <taxon>Bacteria</taxon>
        <taxon>Pseudomonadati</taxon>
        <taxon>Pseudomonadota</taxon>
        <taxon>Gammaproteobacteria</taxon>
        <taxon>Enterobacterales</taxon>
        <taxon>Enterobacteriaceae</taxon>
        <taxon>Escherichia</taxon>
    </lineage>
</organism>
<feature type="chain" id="PRO_1000011463" description="4-hydroxy-3-methylbut-2-en-1-yl diphosphate synthase (flavodoxin)">
    <location>
        <begin position="1"/>
        <end position="372"/>
    </location>
</feature>
<feature type="binding site" evidence="1">
    <location>
        <position position="270"/>
    </location>
    <ligand>
        <name>[4Fe-4S] cluster</name>
        <dbReference type="ChEBI" id="CHEBI:49883"/>
    </ligand>
</feature>
<feature type="binding site" evidence="1">
    <location>
        <position position="273"/>
    </location>
    <ligand>
        <name>[4Fe-4S] cluster</name>
        <dbReference type="ChEBI" id="CHEBI:49883"/>
    </ligand>
</feature>
<feature type="binding site" evidence="1">
    <location>
        <position position="305"/>
    </location>
    <ligand>
        <name>[4Fe-4S] cluster</name>
        <dbReference type="ChEBI" id="CHEBI:49883"/>
    </ligand>
</feature>
<feature type="binding site" evidence="1">
    <location>
        <position position="312"/>
    </location>
    <ligand>
        <name>[4Fe-4S] cluster</name>
        <dbReference type="ChEBI" id="CHEBI:49883"/>
    </ligand>
</feature>
<accession>Q1R8L8</accession>
<name>ISPG_ECOUT</name>
<dbReference type="EC" id="1.17.7.3" evidence="1"/>
<dbReference type="EMBL" id="CP000243">
    <property type="protein sequence ID" value="ABE08296.1"/>
    <property type="molecule type" value="Genomic_DNA"/>
</dbReference>
<dbReference type="RefSeq" id="WP_000551807.1">
    <property type="nucleotide sequence ID" value="NZ_CP064825.1"/>
</dbReference>
<dbReference type="SMR" id="Q1R8L8"/>
<dbReference type="GeneID" id="86947404"/>
<dbReference type="KEGG" id="eci:UTI89_C2836"/>
<dbReference type="HOGENOM" id="CLU_042258_0_0_6"/>
<dbReference type="UniPathway" id="UPA00056">
    <property type="reaction ID" value="UER00096"/>
</dbReference>
<dbReference type="Proteomes" id="UP000001952">
    <property type="component" value="Chromosome"/>
</dbReference>
<dbReference type="GO" id="GO:0051539">
    <property type="term" value="F:4 iron, 4 sulfur cluster binding"/>
    <property type="evidence" value="ECO:0007669"/>
    <property type="project" value="UniProtKB-UniRule"/>
</dbReference>
<dbReference type="GO" id="GO:0046429">
    <property type="term" value="F:4-hydroxy-3-methylbut-2-en-1-yl diphosphate synthase activity (ferredoxin)"/>
    <property type="evidence" value="ECO:0007669"/>
    <property type="project" value="UniProtKB-UniRule"/>
</dbReference>
<dbReference type="GO" id="GO:0141197">
    <property type="term" value="F:4-hydroxy-3-methylbut-2-enyl-diphosphate synthase activity (flavodoxin)"/>
    <property type="evidence" value="ECO:0007669"/>
    <property type="project" value="UniProtKB-EC"/>
</dbReference>
<dbReference type="GO" id="GO:0005506">
    <property type="term" value="F:iron ion binding"/>
    <property type="evidence" value="ECO:0007669"/>
    <property type="project" value="InterPro"/>
</dbReference>
<dbReference type="GO" id="GO:0019288">
    <property type="term" value="P:isopentenyl diphosphate biosynthetic process, methylerythritol 4-phosphate pathway"/>
    <property type="evidence" value="ECO:0007669"/>
    <property type="project" value="UniProtKB-UniRule"/>
</dbReference>
<dbReference type="GO" id="GO:0016114">
    <property type="term" value="P:terpenoid biosynthetic process"/>
    <property type="evidence" value="ECO:0007669"/>
    <property type="project" value="InterPro"/>
</dbReference>
<dbReference type="FunFam" id="3.20.20.20:FF:000001">
    <property type="entry name" value="4-hydroxy-3-methylbut-2-en-1-yl diphosphate synthase (flavodoxin)"/>
    <property type="match status" value="1"/>
</dbReference>
<dbReference type="FunFam" id="3.30.413.10:FF:000002">
    <property type="entry name" value="4-hydroxy-3-methylbut-2-en-1-yl diphosphate synthase (flavodoxin)"/>
    <property type="match status" value="1"/>
</dbReference>
<dbReference type="Gene3D" id="3.20.20.20">
    <property type="entry name" value="Dihydropteroate synthase-like"/>
    <property type="match status" value="1"/>
</dbReference>
<dbReference type="Gene3D" id="3.30.413.10">
    <property type="entry name" value="Sulfite Reductase Hemoprotein, domain 1"/>
    <property type="match status" value="1"/>
</dbReference>
<dbReference type="HAMAP" id="MF_00159">
    <property type="entry name" value="IspG"/>
    <property type="match status" value="1"/>
</dbReference>
<dbReference type="InterPro" id="IPR011005">
    <property type="entry name" value="Dihydropteroate_synth-like_sf"/>
</dbReference>
<dbReference type="InterPro" id="IPR016425">
    <property type="entry name" value="IspG_bac"/>
</dbReference>
<dbReference type="InterPro" id="IPR004588">
    <property type="entry name" value="IspG_bac-typ"/>
</dbReference>
<dbReference type="InterPro" id="IPR045854">
    <property type="entry name" value="NO2/SO3_Rdtase_4Fe4S_sf"/>
</dbReference>
<dbReference type="NCBIfam" id="TIGR00612">
    <property type="entry name" value="ispG_gcpE"/>
    <property type="match status" value="1"/>
</dbReference>
<dbReference type="NCBIfam" id="NF001540">
    <property type="entry name" value="PRK00366.1"/>
    <property type="match status" value="1"/>
</dbReference>
<dbReference type="PANTHER" id="PTHR30454">
    <property type="entry name" value="4-HYDROXY-3-METHYLBUT-2-EN-1-YL DIPHOSPHATE SYNTHASE"/>
    <property type="match status" value="1"/>
</dbReference>
<dbReference type="PANTHER" id="PTHR30454:SF0">
    <property type="entry name" value="4-HYDROXY-3-METHYLBUT-2-EN-1-YL DIPHOSPHATE SYNTHASE (FERREDOXIN), CHLOROPLASTIC"/>
    <property type="match status" value="1"/>
</dbReference>
<dbReference type="Pfam" id="PF04551">
    <property type="entry name" value="GcpE"/>
    <property type="match status" value="1"/>
</dbReference>
<dbReference type="PIRSF" id="PIRSF004640">
    <property type="entry name" value="IspG"/>
    <property type="match status" value="1"/>
</dbReference>
<dbReference type="SUPFAM" id="SSF51717">
    <property type="entry name" value="Dihydropteroate synthetase-like"/>
    <property type="match status" value="1"/>
</dbReference>
<dbReference type="SUPFAM" id="SSF56014">
    <property type="entry name" value="Nitrite and sulphite reductase 4Fe-4S domain-like"/>
    <property type="match status" value="1"/>
</dbReference>
<keyword id="KW-0004">4Fe-4S</keyword>
<keyword id="KW-0408">Iron</keyword>
<keyword id="KW-0411">Iron-sulfur</keyword>
<keyword id="KW-0414">Isoprene biosynthesis</keyword>
<keyword id="KW-0479">Metal-binding</keyword>
<keyword id="KW-0560">Oxidoreductase</keyword>
<reference key="1">
    <citation type="journal article" date="2006" name="Proc. Natl. Acad. Sci. U.S.A.">
        <title>Identification of genes subject to positive selection in uropathogenic strains of Escherichia coli: a comparative genomics approach.</title>
        <authorList>
            <person name="Chen S.L."/>
            <person name="Hung C.-S."/>
            <person name="Xu J."/>
            <person name="Reigstad C.S."/>
            <person name="Magrini V."/>
            <person name="Sabo A."/>
            <person name="Blasiar D."/>
            <person name="Bieri T."/>
            <person name="Meyer R.R."/>
            <person name="Ozersky P."/>
            <person name="Armstrong J.R."/>
            <person name="Fulton R.S."/>
            <person name="Latreille J.P."/>
            <person name="Spieth J."/>
            <person name="Hooton T.M."/>
            <person name="Mardis E.R."/>
            <person name="Hultgren S.J."/>
            <person name="Gordon J.I."/>
        </authorList>
    </citation>
    <scope>NUCLEOTIDE SEQUENCE [LARGE SCALE GENOMIC DNA]</scope>
    <source>
        <strain>UTI89 / UPEC</strain>
    </source>
</reference>
<proteinExistence type="inferred from homology"/>
<gene>
    <name evidence="1" type="primary">ispG</name>
    <name type="ordered locus">UTI89_C2836</name>
</gene>
<protein>
    <recommendedName>
        <fullName evidence="1">4-hydroxy-3-methylbut-2-en-1-yl diphosphate synthase (flavodoxin)</fullName>
        <ecNumber evidence="1">1.17.7.3</ecNumber>
    </recommendedName>
    <alternativeName>
        <fullName evidence="1">1-hydroxy-2-methyl-2-(E)-butenyl 4-diphosphate synthase</fullName>
    </alternativeName>
</protein>
<sequence length="372" mass="40684">MHNQAPIQRRKSTRIYVGNVPIGDGAPIAVQSMTNTRTTDVEATVNQIKALERVGADIVRVSVPTMDAAEAFKLIKQQVNVPLVADIHFDYRIALKVAEYGVDCLRINPGNIGNEERIRMVVDCARDKNIPIRIGVNAGSLEKDLQEKYGEPTPQALLESAMRHVDHLDRLNFDQFKVSVKASDVFLAVESYRLLAKQIDQPLHLGITEAGGARSGAVKSAIGLGLLLSEGIGDTLRVSLAADPVEEIKVGFDILKSLRIRSRGINFIACPTCSRQEFDVIGTVNALEQRLEDIITPMDVSIIGCVVNGPGEALVSTLGVTGGNKKSGLYEDGVRKDRLDNNDMIDQLEARIRAKASQLDEARRIDVQQVEK</sequence>
<comment type="function">
    <text evidence="1">Converts 2C-methyl-D-erythritol 2,4-cyclodiphosphate (ME-2,4cPP) into 1-hydroxy-2-methyl-2-(E)-butenyl 4-diphosphate.</text>
</comment>
<comment type="catalytic activity">
    <reaction evidence="1">
        <text>(2E)-4-hydroxy-3-methylbut-2-enyl diphosphate + oxidized [flavodoxin] + H2O + 2 H(+) = 2-C-methyl-D-erythritol 2,4-cyclic diphosphate + reduced [flavodoxin]</text>
        <dbReference type="Rhea" id="RHEA:43604"/>
        <dbReference type="Rhea" id="RHEA-COMP:10622"/>
        <dbReference type="Rhea" id="RHEA-COMP:10623"/>
        <dbReference type="ChEBI" id="CHEBI:15377"/>
        <dbReference type="ChEBI" id="CHEBI:15378"/>
        <dbReference type="ChEBI" id="CHEBI:57618"/>
        <dbReference type="ChEBI" id="CHEBI:58210"/>
        <dbReference type="ChEBI" id="CHEBI:58483"/>
        <dbReference type="ChEBI" id="CHEBI:128753"/>
        <dbReference type="EC" id="1.17.7.3"/>
    </reaction>
</comment>
<comment type="cofactor">
    <cofactor evidence="1">
        <name>[4Fe-4S] cluster</name>
        <dbReference type="ChEBI" id="CHEBI:49883"/>
    </cofactor>
    <text evidence="1">Binds 1 [4Fe-4S] cluster.</text>
</comment>
<comment type="pathway">
    <text evidence="1">Isoprenoid biosynthesis; isopentenyl diphosphate biosynthesis via DXP pathway; isopentenyl diphosphate from 1-deoxy-D-xylulose 5-phosphate: step 5/6.</text>
</comment>
<comment type="similarity">
    <text evidence="1">Belongs to the IspG family.</text>
</comment>